<keyword id="KW-0255">Endonuclease</keyword>
<keyword id="KW-0378">Hydrolase</keyword>
<keyword id="KW-0540">Nuclease</keyword>
<keyword id="KW-1185">Reference proteome</keyword>
<keyword id="KW-0694">RNA-binding</keyword>
<keyword id="KW-0819">tRNA processing</keyword>
<sequence length="128" mass="15181">MALPKDMRLKGHRTFNYIHKNSITYHGKLMTFKVARSNPGILLTHKLKNTSNKFRVAIAISKKVSKKAVERNKLRRILQEWLLTNIQKINNHKPYWLLVNLKFGDFCNDKSKLLEEFQNLMFKSRLIK</sequence>
<reference key="1">
    <citation type="journal article" date="2007" name="PLoS Genet.">
        <title>Patterns and implications of gene gain and loss in the evolution of Prochlorococcus.</title>
        <authorList>
            <person name="Kettler G.C."/>
            <person name="Martiny A.C."/>
            <person name="Huang K."/>
            <person name="Zucker J."/>
            <person name="Coleman M.L."/>
            <person name="Rodrigue S."/>
            <person name="Chen F."/>
            <person name="Lapidus A."/>
            <person name="Ferriera S."/>
            <person name="Johnson J."/>
            <person name="Steglich C."/>
            <person name="Church G.M."/>
            <person name="Richardson P."/>
            <person name="Chisholm S.W."/>
        </authorList>
    </citation>
    <scope>NUCLEOTIDE SEQUENCE [LARGE SCALE GENOMIC DNA]</scope>
    <source>
        <strain>MIT 9301</strain>
    </source>
</reference>
<gene>
    <name evidence="1" type="primary">rnpA</name>
    <name type="ordered locus">P9301_13851</name>
</gene>
<dbReference type="EC" id="3.1.26.5" evidence="1"/>
<dbReference type="EMBL" id="CP000576">
    <property type="protein sequence ID" value="ABO18008.1"/>
    <property type="molecule type" value="Genomic_DNA"/>
</dbReference>
<dbReference type="RefSeq" id="WP_011863317.1">
    <property type="nucleotide sequence ID" value="NC_009091.1"/>
</dbReference>
<dbReference type="SMR" id="A3PE33"/>
<dbReference type="STRING" id="167546.P9301_13851"/>
<dbReference type="KEGG" id="pmg:P9301_13851"/>
<dbReference type="eggNOG" id="COG0594">
    <property type="taxonomic scope" value="Bacteria"/>
</dbReference>
<dbReference type="HOGENOM" id="CLU_117179_2_0_3"/>
<dbReference type="OrthoDB" id="540358at2"/>
<dbReference type="Proteomes" id="UP000001430">
    <property type="component" value="Chromosome"/>
</dbReference>
<dbReference type="GO" id="GO:0030677">
    <property type="term" value="C:ribonuclease P complex"/>
    <property type="evidence" value="ECO:0007669"/>
    <property type="project" value="TreeGrafter"/>
</dbReference>
<dbReference type="GO" id="GO:0042781">
    <property type="term" value="F:3'-tRNA processing endoribonuclease activity"/>
    <property type="evidence" value="ECO:0007669"/>
    <property type="project" value="TreeGrafter"/>
</dbReference>
<dbReference type="GO" id="GO:0004526">
    <property type="term" value="F:ribonuclease P activity"/>
    <property type="evidence" value="ECO:0007669"/>
    <property type="project" value="UniProtKB-UniRule"/>
</dbReference>
<dbReference type="GO" id="GO:0000049">
    <property type="term" value="F:tRNA binding"/>
    <property type="evidence" value="ECO:0007669"/>
    <property type="project" value="UniProtKB-UniRule"/>
</dbReference>
<dbReference type="GO" id="GO:0001682">
    <property type="term" value="P:tRNA 5'-leader removal"/>
    <property type="evidence" value="ECO:0007669"/>
    <property type="project" value="UniProtKB-UniRule"/>
</dbReference>
<dbReference type="Gene3D" id="3.30.230.10">
    <property type="match status" value="1"/>
</dbReference>
<dbReference type="HAMAP" id="MF_00227">
    <property type="entry name" value="RNase_P"/>
    <property type="match status" value="1"/>
</dbReference>
<dbReference type="InterPro" id="IPR020568">
    <property type="entry name" value="Ribosomal_Su5_D2-typ_SF"/>
</dbReference>
<dbReference type="InterPro" id="IPR014721">
    <property type="entry name" value="Ribsml_uS5_D2-typ_fold_subgr"/>
</dbReference>
<dbReference type="InterPro" id="IPR000100">
    <property type="entry name" value="RNase_P"/>
</dbReference>
<dbReference type="NCBIfam" id="TIGR00188">
    <property type="entry name" value="rnpA"/>
    <property type="match status" value="1"/>
</dbReference>
<dbReference type="PANTHER" id="PTHR33992">
    <property type="entry name" value="RIBONUCLEASE P PROTEIN COMPONENT"/>
    <property type="match status" value="1"/>
</dbReference>
<dbReference type="PANTHER" id="PTHR33992:SF1">
    <property type="entry name" value="RIBONUCLEASE P PROTEIN COMPONENT"/>
    <property type="match status" value="1"/>
</dbReference>
<dbReference type="Pfam" id="PF00825">
    <property type="entry name" value="Ribonuclease_P"/>
    <property type="match status" value="1"/>
</dbReference>
<dbReference type="SUPFAM" id="SSF54211">
    <property type="entry name" value="Ribosomal protein S5 domain 2-like"/>
    <property type="match status" value="1"/>
</dbReference>
<protein>
    <recommendedName>
        <fullName evidence="1">Ribonuclease P protein component</fullName>
        <shortName evidence="1">RNase P protein</shortName>
        <shortName evidence="1">RNaseP protein</shortName>
        <ecNumber evidence="1">3.1.26.5</ecNumber>
    </recommendedName>
    <alternativeName>
        <fullName evidence="1">Protein C5</fullName>
    </alternativeName>
</protein>
<name>RNPA_PROM0</name>
<accession>A3PE33</accession>
<evidence type="ECO:0000255" key="1">
    <source>
        <dbReference type="HAMAP-Rule" id="MF_00227"/>
    </source>
</evidence>
<comment type="function">
    <text evidence="1">RNaseP catalyzes the removal of the 5'-leader sequence from pre-tRNA to produce the mature 5'-terminus. It can also cleave other RNA substrates such as 4.5S RNA. The protein component plays an auxiliary but essential role in vivo by binding to the 5'-leader sequence and broadening the substrate specificity of the ribozyme.</text>
</comment>
<comment type="catalytic activity">
    <reaction evidence="1">
        <text>Endonucleolytic cleavage of RNA, removing 5'-extranucleotides from tRNA precursor.</text>
        <dbReference type="EC" id="3.1.26.5"/>
    </reaction>
</comment>
<comment type="subunit">
    <text evidence="1">Consists of a catalytic RNA component (M1 or rnpB) and a protein subunit.</text>
</comment>
<comment type="similarity">
    <text evidence="1">Belongs to the RnpA family.</text>
</comment>
<feature type="chain" id="PRO_1000194659" description="Ribonuclease P protein component">
    <location>
        <begin position="1"/>
        <end position="128"/>
    </location>
</feature>
<organism>
    <name type="scientific">Prochlorococcus marinus (strain MIT 9301)</name>
    <dbReference type="NCBI Taxonomy" id="167546"/>
    <lineage>
        <taxon>Bacteria</taxon>
        <taxon>Bacillati</taxon>
        <taxon>Cyanobacteriota</taxon>
        <taxon>Cyanophyceae</taxon>
        <taxon>Synechococcales</taxon>
        <taxon>Prochlorococcaceae</taxon>
        <taxon>Prochlorococcus</taxon>
    </lineage>
</organism>
<proteinExistence type="inferred from homology"/>